<proteinExistence type="inferred from homology"/>
<feature type="chain" id="PRO_0000272878" description="Large ribosomal subunit protein uL23">
    <location>
        <begin position="1"/>
        <end position="99"/>
    </location>
</feature>
<comment type="function">
    <text evidence="1">One of the early assembly proteins it binds 23S rRNA. One of the proteins that surrounds the polypeptide exit tunnel on the outside of the ribosome. Forms the main docking site for trigger factor binding to the ribosome.</text>
</comment>
<comment type="subunit">
    <text evidence="1">Part of the 50S ribosomal subunit. Contacts protein L29, and trigger factor when it is bound to the ribosome.</text>
</comment>
<comment type="similarity">
    <text evidence="1">Belongs to the universal ribosomal protein uL23 family.</text>
</comment>
<comment type="sequence caution" evidence="2">
    <conflict type="erroneous initiation">
        <sequence resource="EMBL-CDS" id="AAW76835"/>
    </conflict>
</comment>
<evidence type="ECO:0000255" key="1">
    <source>
        <dbReference type="HAMAP-Rule" id="MF_01369"/>
    </source>
</evidence>
<evidence type="ECO:0000305" key="2"/>
<dbReference type="EMBL" id="AE013598">
    <property type="protein sequence ID" value="AAW76835.1"/>
    <property type="status" value="ALT_INIT"/>
    <property type="molecule type" value="Genomic_DNA"/>
</dbReference>
<dbReference type="SMR" id="Q5GWT6"/>
<dbReference type="STRING" id="291331.XOO3581"/>
<dbReference type="KEGG" id="xoo:XOO3581"/>
<dbReference type="HOGENOM" id="CLU_037562_3_1_6"/>
<dbReference type="Proteomes" id="UP000006735">
    <property type="component" value="Chromosome"/>
</dbReference>
<dbReference type="GO" id="GO:1990904">
    <property type="term" value="C:ribonucleoprotein complex"/>
    <property type="evidence" value="ECO:0007669"/>
    <property type="project" value="UniProtKB-KW"/>
</dbReference>
<dbReference type="GO" id="GO:0005840">
    <property type="term" value="C:ribosome"/>
    <property type="evidence" value="ECO:0007669"/>
    <property type="project" value="UniProtKB-KW"/>
</dbReference>
<dbReference type="GO" id="GO:0019843">
    <property type="term" value="F:rRNA binding"/>
    <property type="evidence" value="ECO:0007669"/>
    <property type="project" value="UniProtKB-UniRule"/>
</dbReference>
<dbReference type="GO" id="GO:0003735">
    <property type="term" value="F:structural constituent of ribosome"/>
    <property type="evidence" value="ECO:0007669"/>
    <property type="project" value="InterPro"/>
</dbReference>
<dbReference type="GO" id="GO:0006412">
    <property type="term" value="P:translation"/>
    <property type="evidence" value="ECO:0007669"/>
    <property type="project" value="UniProtKB-UniRule"/>
</dbReference>
<dbReference type="FunFam" id="3.30.70.330:FF:000001">
    <property type="entry name" value="50S ribosomal protein L23"/>
    <property type="match status" value="1"/>
</dbReference>
<dbReference type="Gene3D" id="3.30.70.330">
    <property type="match status" value="1"/>
</dbReference>
<dbReference type="HAMAP" id="MF_01369_B">
    <property type="entry name" value="Ribosomal_uL23_B"/>
    <property type="match status" value="1"/>
</dbReference>
<dbReference type="InterPro" id="IPR012677">
    <property type="entry name" value="Nucleotide-bd_a/b_plait_sf"/>
</dbReference>
<dbReference type="InterPro" id="IPR013025">
    <property type="entry name" value="Ribosomal_uL23-like"/>
</dbReference>
<dbReference type="InterPro" id="IPR012678">
    <property type="entry name" value="Ribosomal_uL23/eL15/eS24_sf"/>
</dbReference>
<dbReference type="NCBIfam" id="NF004359">
    <property type="entry name" value="PRK05738.1-3"/>
    <property type="match status" value="1"/>
</dbReference>
<dbReference type="NCBIfam" id="NF004363">
    <property type="entry name" value="PRK05738.2-4"/>
    <property type="match status" value="1"/>
</dbReference>
<dbReference type="PANTHER" id="PTHR11620">
    <property type="entry name" value="60S RIBOSOMAL PROTEIN L23A"/>
    <property type="match status" value="1"/>
</dbReference>
<dbReference type="Pfam" id="PF00276">
    <property type="entry name" value="Ribosomal_L23"/>
    <property type="match status" value="1"/>
</dbReference>
<dbReference type="SUPFAM" id="SSF54189">
    <property type="entry name" value="Ribosomal proteins S24e, L23 and L15e"/>
    <property type="match status" value="1"/>
</dbReference>
<gene>
    <name evidence="1" type="primary">rplW</name>
    <name type="ordered locus">XOO3581</name>
</gene>
<sequence length="99" mass="11044">MSSNEKIFSVLRAPRVSEKTARLQEISNQYVFEVSNEATKADVKAAVEQLFDVKVKAVNVVNVKGKSKSFRNRAGNRGNWRKAYVRLVDGQSIDVTAKA</sequence>
<organism>
    <name type="scientific">Xanthomonas oryzae pv. oryzae (strain KACC10331 / KXO85)</name>
    <dbReference type="NCBI Taxonomy" id="291331"/>
    <lineage>
        <taxon>Bacteria</taxon>
        <taxon>Pseudomonadati</taxon>
        <taxon>Pseudomonadota</taxon>
        <taxon>Gammaproteobacteria</taxon>
        <taxon>Lysobacterales</taxon>
        <taxon>Lysobacteraceae</taxon>
        <taxon>Xanthomonas</taxon>
    </lineage>
</organism>
<keyword id="KW-1185">Reference proteome</keyword>
<keyword id="KW-0687">Ribonucleoprotein</keyword>
<keyword id="KW-0689">Ribosomal protein</keyword>
<keyword id="KW-0694">RNA-binding</keyword>
<keyword id="KW-0699">rRNA-binding</keyword>
<accession>Q5GWT6</accession>
<name>RL23_XANOR</name>
<protein>
    <recommendedName>
        <fullName evidence="1">Large ribosomal subunit protein uL23</fullName>
    </recommendedName>
    <alternativeName>
        <fullName evidence="2">50S ribosomal protein L23</fullName>
    </alternativeName>
</protein>
<reference key="1">
    <citation type="journal article" date="2005" name="Nucleic Acids Res.">
        <title>The genome sequence of Xanthomonas oryzae pathovar oryzae KACC10331, the bacterial blight pathogen of rice.</title>
        <authorList>
            <person name="Lee B.-M."/>
            <person name="Park Y.-J."/>
            <person name="Park D.-S."/>
            <person name="Kang H.-W."/>
            <person name="Kim J.-G."/>
            <person name="Song E.-S."/>
            <person name="Park I.-C."/>
            <person name="Yoon U.-H."/>
            <person name="Hahn J.-H."/>
            <person name="Koo B.-S."/>
            <person name="Lee G.-B."/>
            <person name="Kim H."/>
            <person name="Park H.-S."/>
            <person name="Yoon K.-O."/>
            <person name="Kim J.-H."/>
            <person name="Jung C.-H."/>
            <person name="Koh N.-H."/>
            <person name="Seo J.-S."/>
            <person name="Go S.-J."/>
        </authorList>
    </citation>
    <scope>NUCLEOTIDE SEQUENCE [LARGE SCALE GENOMIC DNA]</scope>
    <source>
        <strain>KACC10331 / KXO85</strain>
    </source>
</reference>